<protein>
    <recommendedName>
        <fullName>Uncharacterized protein UL150A</fullName>
    </recommendedName>
</protein>
<dbReference type="EMBL" id="AY446894">
    <property type="protein sequence ID" value="AEJ33669.1"/>
    <property type="molecule type" value="Genomic_DNA"/>
</dbReference>
<dbReference type="RefSeq" id="YP_004940331.1">
    <property type="nucleotide sequence ID" value="NC_006273.2"/>
</dbReference>
<dbReference type="GeneID" id="13229471"/>
<dbReference type="KEGG" id="vg:13229471"/>
<dbReference type="Proteomes" id="UP000000938">
    <property type="component" value="Segment"/>
</dbReference>
<organism>
    <name type="scientific">Human cytomegalovirus (strain Merlin)</name>
    <name type="common">HHV-5</name>
    <name type="synonym">Human herpesvirus 5</name>
    <dbReference type="NCBI Taxonomy" id="295027"/>
    <lineage>
        <taxon>Viruses</taxon>
        <taxon>Duplodnaviria</taxon>
        <taxon>Heunggongvirae</taxon>
        <taxon>Peploviricota</taxon>
        <taxon>Herviviricetes</taxon>
        <taxon>Herpesvirales</taxon>
        <taxon>Orthoherpesviridae</taxon>
        <taxon>Betaherpesvirinae</taxon>
        <taxon>Cytomegalovirus</taxon>
        <taxon>Cytomegalovirus humanbeta5</taxon>
        <taxon>Human cytomegalovirus</taxon>
    </lineage>
</organism>
<accession>F7V998</accession>
<keyword id="KW-1185">Reference proteome</keyword>
<sequence length="271" mass="29410">MASCSPPRRVSPDLLVSSELRRRNIWRRVTCVTGERGSPAVTTAVSSTRVRPAVLCGKAPVSETVDEKENGAATAGGGGVNAAVDVRRCEYSETAVRQKLDPSGNDSRCVVAAADSSTDSDGKSIIAGVQVVDHDEDIIAPQSLWCTAFKEALWDVALLEVPRWAWQGWKRWRNSESGRRWSAGSASASSLSDLAGEAVGELVGSVVAYVILERLWLAARGWVCETGVEAEEAMARRRQRMLWRMFSRGGDGECSRRCSMEMACEEESAVL</sequence>
<feature type="chain" id="PRO_0000418330" description="Uncharacterized protein UL150A">
    <location>
        <begin position="1"/>
        <end position="271"/>
    </location>
</feature>
<reference key="1">
    <citation type="journal article" date="2004" name="J. Gen. Virol.">
        <title>Genetic content of wild-type human cytomegalovirus.</title>
        <authorList>
            <person name="Dolan A."/>
            <person name="Cunningham C."/>
            <person name="Hector R.D."/>
            <person name="Hassan-Walker A.F."/>
            <person name="Lee L."/>
            <person name="Addison C."/>
            <person name="Dargan D.J."/>
            <person name="McGeoch D.J."/>
            <person name="Gatherer D."/>
            <person name="Emery V.C."/>
            <person name="Griffiths P.D."/>
            <person name="Sinzger C."/>
            <person name="McSharry B.P."/>
            <person name="Wilkinson G.W.G."/>
            <person name="Davison A.J."/>
        </authorList>
    </citation>
    <scope>NUCLEOTIDE SEQUENCE [LARGE SCALE GENOMIC DNA]</scope>
</reference>
<name>U150A_HCMVM</name>
<gene>
    <name type="primary">UL150A</name>
</gene>
<organismHost>
    <name type="scientific">Homo sapiens</name>
    <name type="common">Human</name>
    <dbReference type="NCBI Taxonomy" id="9606"/>
</organismHost>
<proteinExistence type="predicted"/>